<gene>
    <name type="primary">DEFB119</name>
    <name type="synonym">DEFB120</name>
</gene>
<evidence type="ECO:0000250" key="1"/>
<evidence type="ECO:0000255" key="2"/>
<evidence type="ECO:0000269" key="3">
    <source>
    </source>
</evidence>
<evidence type="ECO:0000303" key="4">
    <source>
    </source>
</evidence>
<evidence type="ECO:0000305" key="5"/>
<feature type="signal peptide" evidence="2">
    <location>
        <begin position="1"/>
        <end position="21"/>
    </location>
</feature>
<feature type="peptide" id="PRO_0000006988" description="Beta-defensin 119">
    <location>
        <begin position="22"/>
        <end position="84"/>
    </location>
</feature>
<feature type="disulfide bond" evidence="1">
    <location>
        <begin position="28"/>
        <end position="55"/>
    </location>
</feature>
<feature type="disulfide bond" evidence="1">
    <location>
        <begin position="35"/>
        <end position="49"/>
    </location>
</feature>
<feature type="disulfide bond" evidence="1">
    <location>
        <begin position="39"/>
        <end position="56"/>
    </location>
</feature>
<feature type="splice variant" id="VSP_029874" description="In isoform 2." evidence="4">
    <original>GKRHILRCMGNSGICRASCKKNEQPYLYCRNYQACCLQSYMRISISGKEENTDWSYEKQWPRLP</original>
    <variation>VECWMDGHCRLLCKDGEDSIIRCRNRKRCCVPSRYLTIQPVTIHGILGWTTPRMSTTAPQPKRNIHNG</variation>
    <location>
        <begin position="21"/>
        <end position="84"/>
    </location>
</feature>
<name>DB119_MACMU</name>
<accession>Q5J602</accession>
<accession>Q5J601</accession>
<reference key="1">
    <citation type="journal article" date="2005" name="Genes Immun.">
        <title>Identification, characterization, and evolution of a primate beta-defensin gene cluster.</title>
        <authorList>
            <person name="Radhakrishnan Y."/>
            <person name="Hamil K.G."/>
            <person name="Yenugu S."/>
            <person name="Young S.L."/>
            <person name="French F.S."/>
            <person name="Hall S.H."/>
        </authorList>
    </citation>
    <scope>NUCLEOTIDE SEQUENCE [MRNA] (ISOFORMS 1 AND 2)</scope>
    <scope>TISSUE SPECIFICITY</scope>
    <source>
        <tissue>Testis</tissue>
    </source>
</reference>
<comment type="function">
    <text evidence="5">Has antibacterial activity.</text>
</comment>
<comment type="subcellular location">
    <subcellularLocation>
        <location evidence="5">Secreted</location>
    </subcellularLocation>
</comment>
<comment type="alternative products">
    <event type="alternative splicing"/>
    <isoform>
        <id>Q5J602-1</id>
        <name>1</name>
        <sequence type="displayed"/>
    </isoform>
    <isoform>
        <id>Q5J602-2</id>
        <name>2</name>
        <sequence type="described" ref="VSP_029874"/>
    </isoform>
</comment>
<comment type="tissue specificity">
    <text evidence="3">Abundant expression in the male reproductive tract only. Expressed abundantly in testis, while expression in epididymis decreased gradually from caput to cauda.</text>
</comment>
<comment type="similarity">
    <text evidence="5">Belongs to the beta-defensin family.</text>
</comment>
<protein>
    <recommendedName>
        <fullName>Beta-defensin 119</fullName>
    </recommendedName>
    <alternativeName>
        <fullName>Beta-defensin 120</fullName>
    </alternativeName>
    <alternativeName>
        <fullName>Defensin, beta 119</fullName>
    </alternativeName>
    <alternativeName>
        <fullName>Defensin, beta 120</fullName>
    </alternativeName>
</protein>
<dbReference type="EMBL" id="AY499406">
    <property type="protein sequence ID" value="AAS89325.1"/>
    <property type="molecule type" value="mRNA"/>
</dbReference>
<dbReference type="EMBL" id="AY499407">
    <property type="protein sequence ID" value="AAS89326.1"/>
    <property type="molecule type" value="mRNA"/>
</dbReference>
<dbReference type="RefSeq" id="NP_001028080.1">
    <molecule id="Q5J602-1"/>
    <property type="nucleotide sequence ID" value="NM_001032908.2"/>
</dbReference>
<dbReference type="RefSeq" id="NP_001028081.1">
    <molecule id="Q5J602-2"/>
    <property type="nucleotide sequence ID" value="NM_001032909.2"/>
</dbReference>
<dbReference type="RefSeq" id="XP_015004774.1">
    <property type="nucleotide sequence ID" value="XM_015149288.1"/>
</dbReference>
<dbReference type="SMR" id="Q5J602"/>
<dbReference type="Ensembl" id="ENSMMUT00000012296.3">
    <molecule id="Q5J602-1"/>
    <property type="protein sequence ID" value="ENSMMUP00000011534.1"/>
    <property type="gene ID" value="ENSMMUG00000008796.4"/>
</dbReference>
<dbReference type="Ensembl" id="ENSMMUT00000012298.4">
    <molecule id="Q5J602-2"/>
    <property type="protein sequence ID" value="ENSMMUP00000011536.4"/>
    <property type="gene ID" value="ENSMMUG00000008796.4"/>
</dbReference>
<dbReference type="GeneID" id="574286"/>
<dbReference type="KEGG" id="mcc:574286"/>
<dbReference type="CTD" id="245932"/>
<dbReference type="VEuPathDB" id="HostDB:ENSMMUG00000008796"/>
<dbReference type="GeneTree" id="ENSGT00390000000279"/>
<dbReference type="HOGENOM" id="CLU_193927_0_0_1"/>
<dbReference type="InParanoid" id="Q5J602"/>
<dbReference type="OMA" id="QENRWPK"/>
<dbReference type="OrthoDB" id="9624411at2759"/>
<dbReference type="Proteomes" id="UP000006718">
    <property type="component" value="Chromosome 10"/>
</dbReference>
<dbReference type="Bgee" id="ENSMMUG00000008796">
    <property type="expression patterns" value="Expressed in testis and 7 other cell types or tissues"/>
</dbReference>
<dbReference type="ExpressionAtlas" id="Q5J602">
    <property type="expression patterns" value="baseline"/>
</dbReference>
<dbReference type="GO" id="GO:0005576">
    <property type="term" value="C:extracellular region"/>
    <property type="evidence" value="ECO:0007669"/>
    <property type="project" value="UniProtKB-SubCell"/>
</dbReference>
<dbReference type="GO" id="GO:0050829">
    <property type="term" value="P:defense response to Gram-negative bacterium"/>
    <property type="evidence" value="ECO:0007669"/>
    <property type="project" value="InterPro"/>
</dbReference>
<dbReference type="GO" id="GO:0050830">
    <property type="term" value="P:defense response to Gram-positive bacterium"/>
    <property type="evidence" value="ECO:0007669"/>
    <property type="project" value="InterPro"/>
</dbReference>
<dbReference type="InterPro" id="IPR028060">
    <property type="entry name" value="Defensin_big_dom"/>
</dbReference>
<dbReference type="PANTHER" id="PTHR47902">
    <property type="entry name" value="BETA-DEFENSIN 119"/>
    <property type="match status" value="1"/>
</dbReference>
<dbReference type="PANTHER" id="PTHR47902:SF1">
    <property type="entry name" value="BETA-DEFENSIN 119"/>
    <property type="match status" value="1"/>
</dbReference>
<dbReference type="Pfam" id="PF14862">
    <property type="entry name" value="Defensin_big"/>
    <property type="match status" value="1"/>
</dbReference>
<proteinExistence type="evidence at transcript level"/>
<sequence>MKFLFLFLAILLATEVPVISGKRHILRCMGNSGICRASCKKNEQPYLYCRNYQACCLQSYMRISISGKEENTDWSYEKQWPRLP</sequence>
<organism>
    <name type="scientific">Macaca mulatta</name>
    <name type="common">Rhesus macaque</name>
    <dbReference type="NCBI Taxonomy" id="9544"/>
    <lineage>
        <taxon>Eukaryota</taxon>
        <taxon>Metazoa</taxon>
        <taxon>Chordata</taxon>
        <taxon>Craniata</taxon>
        <taxon>Vertebrata</taxon>
        <taxon>Euteleostomi</taxon>
        <taxon>Mammalia</taxon>
        <taxon>Eutheria</taxon>
        <taxon>Euarchontoglires</taxon>
        <taxon>Primates</taxon>
        <taxon>Haplorrhini</taxon>
        <taxon>Catarrhini</taxon>
        <taxon>Cercopithecidae</taxon>
        <taxon>Cercopithecinae</taxon>
        <taxon>Macaca</taxon>
    </lineage>
</organism>
<keyword id="KW-0025">Alternative splicing</keyword>
<keyword id="KW-0044">Antibiotic</keyword>
<keyword id="KW-0929">Antimicrobial</keyword>
<keyword id="KW-0211">Defensin</keyword>
<keyword id="KW-1015">Disulfide bond</keyword>
<keyword id="KW-1185">Reference proteome</keyword>
<keyword id="KW-0964">Secreted</keyword>
<keyword id="KW-0732">Signal</keyword>